<comment type="function">
    <text evidence="1">Attaches a formyl group to the free amino group of methionyl-tRNA(fMet). The formyl group appears to play a dual role in the initiator identity of N-formylmethionyl-tRNA by promoting its recognition by IF2 and preventing the misappropriation of this tRNA by the elongation apparatus.</text>
</comment>
<comment type="catalytic activity">
    <reaction evidence="1">
        <text>L-methionyl-tRNA(fMet) + (6R)-10-formyltetrahydrofolate = N-formyl-L-methionyl-tRNA(fMet) + (6S)-5,6,7,8-tetrahydrofolate + H(+)</text>
        <dbReference type="Rhea" id="RHEA:24380"/>
        <dbReference type="Rhea" id="RHEA-COMP:9952"/>
        <dbReference type="Rhea" id="RHEA-COMP:9953"/>
        <dbReference type="ChEBI" id="CHEBI:15378"/>
        <dbReference type="ChEBI" id="CHEBI:57453"/>
        <dbReference type="ChEBI" id="CHEBI:78530"/>
        <dbReference type="ChEBI" id="CHEBI:78844"/>
        <dbReference type="ChEBI" id="CHEBI:195366"/>
        <dbReference type="EC" id="2.1.2.9"/>
    </reaction>
</comment>
<comment type="similarity">
    <text evidence="1">Belongs to the Fmt family.</text>
</comment>
<organism>
    <name type="scientific">Solibacter usitatus (strain Ellin6076)</name>
    <dbReference type="NCBI Taxonomy" id="234267"/>
    <lineage>
        <taxon>Bacteria</taxon>
        <taxon>Pseudomonadati</taxon>
        <taxon>Acidobacteriota</taxon>
        <taxon>Terriglobia</taxon>
        <taxon>Bryobacterales</taxon>
        <taxon>Solibacteraceae</taxon>
        <taxon>Candidatus Solibacter</taxon>
    </lineage>
</organism>
<protein>
    <recommendedName>
        <fullName evidence="1">Methionyl-tRNA formyltransferase</fullName>
        <ecNumber evidence="1">2.1.2.9</ecNumber>
    </recommendedName>
</protein>
<name>FMT_SOLUE</name>
<accession>Q023V5</accession>
<proteinExistence type="inferred from homology"/>
<dbReference type="EC" id="2.1.2.9" evidence="1"/>
<dbReference type="EMBL" id="CP000473">
    <property type="protein sequence ID" value="ABJ83735.1"/>
    <property type="molecule type" value="Genomic_DNA"/>
</dbReference>
<dbReference type="SMR" id="Q023V5"/>
<dbReference type="FunCoup" id="Q023V5">
    <property type="interactions" value="557"/>
</dbReference>
<dbReference type="STRING" id="234267.Acid_2747"/>
<dbReference type="KEGG" id="sus:Acid_2747"/>
<dbReference type="eggNOG" id="COG0223">
    <property type="taxonomic scope" value="Bacteria"/>
</dbReference>
<dbReference type="HOGENOM" id="CLU_033347_1_1_0"/>
<dbReference type="InParanoid" id="Q023V5"/>
<dbReference type="OrthoDB" id="9802815at2"/>
<dbReference type="GO" id="GO:0005829">
    <property type="term" value="C:cytosol"/>
    <property type="evidence" value="ECO:0007669"/>
    <property type="project" value="TreeGrafter"/>
</dbReference>
<dbReference type="GO" id="GO:0004479">
    <property type="term" value="F:methionyl-tRNA formyltransferase activity"/>
    <property type="evidence" value="ECO:0007669"/>
    <property type="project" value="UniProtKB-UniRule"/>
</dbReference>
<dbReference type="CDD" id="cd08646">
    <property type="entry name" value="FMT_core_Met-tRNA-FMT_N"/>
    <property type="match status" value="1"/>
</dbReference>
<dbReference type="CDD" id="cd08704">
    <property type="entry name" value="Met_tRNA_FMT_C"/>
    <property type="match status" value="1"/>
</dbReference>
<dbReference type="FunFam" id="3.40.50.12230:FF:000001">
    <property type="entry name" value="Methionyl-tRNA formyltransferase"/>
    <property type="match status" value="1"/>
</dbReference>
<dbReference type="Gene3D" id="3.40.50.12230">
    <property type="match status" value="1"/>
</dbReference>
<dbReference type="HAMAP" id="MF_00182">
    <property type="entry name" value="Formyl_trans"/>
    <property type="match status" value="1"/>
</dbReference>
<dbReference type="InterPro" id="IPR005794">
    <property type="entry name" value="Fmt"/>
</dbReference>
<dbReference type="InterPro" id="IPR005793">
    <property type="entry name" value="Formyl_trans_C"/>
</dbReference>
<dbReference type="InterPro" id="IPR002376">
    <property type="entry name" value="Formyl_transf_N"/>
</dbReference>
<dbReference type="InterPro" id="IPR036477">
    <property type="entry name" value="Formyl_transf_N_sf"/>
</dbReference>
<dbReference type="InterPro" id="IPR011034">
    <property type="entry name" value="Formyl_transferase-like_C_sf"/>
</dbReference>
<dbReference type="InterPro" id="IPR044135">
    <property type="entry name" value="Met-tRNA-FMT_C"/>
</dbReference>
<dbReference type="InterPro" id="IPR041711">
    <property type="entry name" value="Met-tRNA-FMT_N"/>
</dbReference>
<dbReference type="NCBIfam" id="TIGR00460">
    <property type="entry name" value="fmt"/>
    <property type="match status" value="1"/>
</dbReference>
<dbReference type="PANTHER" id="PTHR11138">
    <property type="entry name" value="METHIONYL-TRNA FORMYLTRANSFERASE"/>
    <property type="match status" value="1"/>
</dbReference>
<dbReference type="PANTHER" id="PTHR11138:SF5">
    <property type="entry name" value="METHIONYL-TRNA FORMYLTRANSFERASE, MITOCHONDRIAL"/>
    <property type="match status" value="1"/>
</dbReference>
<dbReference type="Pfam" id="PF02911">
    <property type="entry name" value="Formyl_trans_C"/>
    <property type="match status" value="1"/>
</dbReference>
<dbReference type="Pfam" id="PF00551">
    <property type="entry name" value="Formyl_trans_N"/>
    <property type="match status" value="1"/>
</dbReference>
<dbReference type="SUPFAM" id="SSF50486">
    <property type="entry name" value="FMT C-terminal domain-like"/>
    <property type="match status" value="1"/>
</dbReference>
<dbReference type="SUPFAM" id="SSF53328">
    <property type="entry name" value="Formyltransferase"/>
    <property type="match status" value="1"/>
</dbReference>
<gene>
    <name evidence="1" type="primary">fmt</name>
    <name type="ordered locus">Acid_2747</name>
</gene>
<feature type="chain" id="PRO_1000077323" description="Methionyl-tRNA formyltransferase">
    <location>
        <begin position="1"/>
        <end position="311"/>
    </location>
</feature>
<feature type="binding site" evidence="1">
    <location>
        <begin position="109"/>
        <end position="112"/>
    </location>
    <ligand>
        <name>(6S)-5,6,7,8-tetrahydrofolate</name>
        <dbReference type="ChEBI" id="CHEBI:57453"/>
    </ligand>
</feature>
<keyword id="KW-0648">Protein biosynthesis</keyword>
<keyword id="KW-0808">Transferase</keyword>
<evidence type="ECO:0000255" key="1">
    <source>
        <dbReference type="HAMAP-Rule" id="MF_00182"/>
    </source>
</evidence>
<reference key="1">
    <citation type="journal article" date="2009" name="Appl. Environ. Microbiol.">
        <title>Three genomes from the phylum Acidobacteria provide insight into the lifestyles of these microorganisms in soils.</title>
        <authorList>
            <person name="Ward N.L."/>
            <person name="Challacombe J.F."/>
            <person name="Janssen P.H."/>
            <person name="Henrissat B."/>
            <person name="Coutinho P.M."/>
            <person name="Wu M."/>
            <person name="Xie G."/>
            <person name="Haft D.H."/>
            <person name="Sait M."/>
            <person name="Badger J."/>
            <person name="Barabote R.D."/>
            <person name="Bradley B."/>
            <person name="Brettin T.S."/>
            <person name="Brinkac L.M."/>
            <person name="Bruce D."/>
            <person name="Creasy T."/>
            <person name="Daugherty S.C."/>
            <person name="Davidsen T.M."/>
            <person name="DeBoy R.T."/>
            <person name="Detter J.C."/>
            <person name="Dodson R.J."/>
            <person name="Durkin A.S."/>
            <person name="Ganapathy A."/>
            <person name="Gwinn-Giglio M."/>
            <person name="Han C.S."/>
            <person name="Khouri H."/>
            <person name="Kiss H."/>
            <person name="Kothari S.P."/>
            <person name="Madupu R."/>
            <person name="Nelson K.E."/>
            <person name="Nelson W.C."/>
            <person name="Paulsen I."/>
            <person name="Penn K."/>
            <person name="Ren Q."/>
            <person name="Rosovitz M.J."/>
            <person name="Selengut J.D."/>
            <person name="Shrivastava S."/>
            <person name="Sullivan S.A."/>
            <person name="Tapia R."/>
            <person name="Thompson L.S."/>
            <person name="Watkins K.L."/>
            <person name="Yang Q."/>
            <person name="Yu C."/>
            <person name="Zafar N."/>
            <person name="Zhou L."/>
            <person name="Kuske C.R."/>
        </authorList>
    </citation>
    <scope>NUCLEOTIDE SEQUENCE [LARGE SCALE GENOMIC DNA]</scope>
    <source>
        <strain>Ellin6076</strain>
    </source>
</reference>
<sequence>MRLVFLGTPAFAVPTLEAVVRAGHEVAAVLTQPDRPRGRGQNPAASPVKQAALALSLEVYQPERVRRPEPVEFLRGIGARAMVIVGYGQIIPQNVIDLAPLGIINVHASLLPKYRGAGPIQWSIVNGETRTGVTTMRIDAGLDTGDMLLKRDTEIGPEENAMELGARLAVLGADLLVKTLAGLEAGTIVPEKQDDSQATLAPLLKKEDGRIDWAQPALAIHNRVRGLQPWPGAQTTFRGQPLHIWKSRPVTAAQAAAPGAVLRTRPLLVASGEGALELLEVQQEGRKRIPAADFANGQRLTENEKLGEGHL</sequence>